<feature type="chain" id="PRO_1000114356" description="Protein RecA">
    <location>
        <begin position="1"/>
        <end position="355"/>
    </location>
</feature>
<feature type="binding site" evidence="1">
    <location>
        <begin position="65"/>
        <end position="72"/>
    </location>
    <ligand>
        <name>ATP</name>
        <dbReference type="ChEBI" id="CHEBI:30616"/>
    </ligand>
</feature>
<sequence>MDDNKKRALAAALGQIERQFGKGAVMRMGDHERTGIPAISTGSLGLDIALGIGGLPKGRIVEIYGPESSGKTTLTLSVIAEAQKSGATCAFVDAEHALDPEYAGKLGVNVDDLLVSQPDTGEQALEITDMLVRSNAVDVIIVDSVAALVPKAEIEGEMGDMHVGLQARLMSQALRKITGNIKNANCLVIFINQIRMKIGVMFGSPETTTGGNALKFYASVRLDIRRTGAVKEGDEVVGSETRVKIVKNKVSPPFRQAEFQILYGKGIYRNGEIIDLGVSQGLVEKSGAWYAYQGNKIGQGKANAAKYLQENPAIGAEIEKQIREKLLKAGVVAEAGKAAAADAKADDVADADAGY</sequence>
<protein>
    <recommendedName>
        <fullName evidence="1">Protein RecA</fullName>
    </recommendedName>
    <alternativeName>
        <fullName evidence="1">Recombinase A</fullName>
    </alternativeName>
</protein>
<comment type="function">
    <text evidence="1">Can catalyze the hydrolysis of ATP in the presence of single-stranded DNA, the ATP-dependent uptake of single-stranded DNA by duplex DNA, and the ATP-dependent hybridization of homologous single-stranded DNAs. It interacts with LexA causing its activation and leading to its autocatalytic cleavage.</text>
</comment>
<comment type="subcellular location">
    <subcellularLocation>
        <location evidence="1">Cytoplasm</location>
    </subcellularLocation>
</comment>
<comment type="similarity">
    <text evidence="1">Belongs to the RecA family.</text>
</comment>
<accession>B1JDA2</accession>
<organism>
    <name type="scientific">Pseudomonas putida (strain W619)</name>
    <dbReference type="NCBI Taxonomy" id="390235"/>
    <lineage>
        <taxon>Bacteria</taxon>
        <taxon>Pseudomonadati</taxon>
        <taxon>Pseudomonadota</taxon>
        <taxon>Gammaproteobacteria</taxon>
        <taxon>Pseudomonadales</taxon>
        <taxon>Pseudomonadaceae</taxon>
        <taxon>Pseudomonas</taxon>
    </lineage>
</organism>
<reference key="1">
    <citation type="submission" date="2008-02" db="EMBL/GenBank/DDBJ databases">
        <title>Complete sequence of Pseudomonas putida W619.</title>
        <authorList>
            <person name="Copeland A."/>
            <person name="Lucas S."/>
            <person name="Lapidus A."/>
            <person name="Barry K."/>
            <person name="Detter J.C."/>
            <person name="Glavina del Rio T."/>
            <person name="Dalin E."/>
            <person name="Tice H."/>
            <person name="Pitluck S."/>
            <person name="Chain P."/>
            <person name="Malfatti S."/>
            <person name="Shin M."/>
            <person name="Vergez L."/>
            <person name="Schmutz J."/>
            <person name="Larimer F."/>
            <person name="Land M."/>
            <person name="Hauser L."/>
            <person name="Kyrpides N."/>
            <person name="Kim E."/>
            <person name="Taghavi S."/>
            <person name="Vangronsveld D."/>
            <person name="van der Lelie D."/>
            <person name="Richardson P."/>
        </authorList>
    </citation>
    <scope>NUCLEOTIDE SEQUENCE [LARGE SCALE GENOMIC DNA]</scope>
    <source>
        <strain>W619</strain>
    </source>
</reference>
<keyword id="KW-0067">ATP-binding</keyword>
<keyword id="KW-0963">Cytoplasm</keyword>
<keyword id="KW-0227">DNA damage</keyword>
<keyword id="KW-0233">DNA recombination</keyword>
<keyword id="KW-0234">DNA repair</keyword>
<keyword id="KW-0238">DNA-binding</keyword>
<keyword id="KW-0547">Nucleotide-binding</keyword>
<keyword id="KW-0742">SOS response</keyword>
<dbReference type="EMBL" id="CP000949">
    <property type="protein sequence ID" value="ACA74510.1"/>
    <property type="molecule type" value="Genomic_DNA"/>
</dbReference>
<dbReference type="SMR" id="B1JDA2"/>
<dbReference type="STRING" id="390235.PputW619_4030"/>
<dbReference type="KEGG" id="ppw:PputW619_4030"/>
<dbReference type="eggNOG" id="COG0468">
    <property type="taxonomic scope" value="Bacteria"/>
</dbReference>
<dbReference type="HOGENOM" id="CLU_040469_3_2_6"/>
<dbReference type="OrthoDB" id="9776733at2"/>
<dbReference type="GO" id="GO:0005829">
    <property type="term" value="C:cytosol"/>
    <property type="evidence" value="ECO:0007669"/>
    <property type="project" value="TreeGrafter"/>
</dbReference>
<dbReference type="GO" id="GO:0005524">
    <property type="term" value="F:ATP binding"/>
    <property type="evidence" value="ECO:0007669"/>
    <property type="project" value="UniProtKB-UniRule"/>
</dbReference>
<dbReference type="GO" id="GO:0016887">
    <property type="term" value="F:ATP hydrolysis activity"/>
    <property type="evidence" value="ECO:0007669"/>
    <property type="project" value="InterPro"/>
</dbReference>
<dbReference type="GO" id="GO:0140664">
    <property type="term" value="F:ATP-dependent DNA damage sensor activity"/>
    <property type="evidence" value="ECO:0007669"/>
    <property type="project" value="InterPro"/>
</dbReference>
<dbReference type="GO" id="GO:0003684">
    <property type="term" value="F:damaged DNA binding"/>
    <property type="evidence" value="ECO:0007669"/>
    <property type="project" value="UniProtKB-UniRule"/>
</dbReference>
<dbReference type="GO" id="GO:0003697">
    <property type="term" value="F:single-stranded DNA binding"/>
    <property type="evidence" value="ECO:0007669"/>
    <property type="project" value="UniProtKB-UniRule"/>
</dbReference>
<dbReference type="GO" id="GO:0006310">
    <property type="term" value="P:DNA recombination"/>
    <property type="evidence" value="ECO:0007669"/>
    <property type="project" value="UniProtKB-UniRule"/>
</dbReference>
<dbReference type="GO" id="GO:0006281">
    <property type="term" value="P:DNA repair"/>
    <property type="evidence" value="ECO:0007669"/>
    <property type="project" value="UniProtKB-UniRule"/>
</dbReference>
<dbReference type="GO" id="GO:0009432">
    <property type="term" value="P:SOS response"/>
    <property type="evidence" value="ECO:0007669"/>
    <property type="project" value="UniProtKB-UniRule"/>
</dbReference>
<dbReference type="CDD" id="cd00983">
    <property type="entry name" value="RecA"/>
    <property type="match status" value="1"/>
</dbReference>
<dbReference type="FunFam" id="3.40.50.300:FF:000087">
    <property type="entry name" value="Recombinase RecA"/>
    <property type="match status" value="1"/>
</dbReference>
<dbReference type="Gene3D" id="3.40.50.300">
    <property type="entry name" value="P-loop containing nucleotide triphosphate hydrolases"/>
    <property type="match status" value="1"/>
</dbReference>
<dbReference type="HAMAP" id="MF_00268">
    <property type="entry name" value="RecA"/>
    <property type="match status" value="1"/>
</dbReference>
<dbReference type="InterPro" id="IPR003593">
    <property type="entry name" value="AAA+_ATPase"/>
</dbReference>
<dbReference type="InterPro" id="IPR013765">
    <property type="entry name" value="DNA_recomb/repair_RecA"/>
</dbReference>
<dbReference type="InterPro" id="IPR020584">
    <property type="entry name" value="DNA_recomb/repair_RecA_CS"/>
</dbReference>
<dbReference type="InterPro" id="IPR027417">
    <property type="entry name" value="P-loop_NTPase"/>
</dbReference>
<dbReference type="InterPro" id="IPR049261">
    <property type="entry name" value="RecA-like_C"/>
</dbReference>
<dbReference type="InterPro" id="IPR049428">
    <property type="entry name" value="RecA-like_N"/>
</dbReference>
<dbReference type="InterPro" id="IPR020588">
    <property type="entry name" value="RecA_ATP-bd"/>
</dbReference>
<dbReference type="InterPro" id="IPR023400">
    <property type="entry name" value="RecA_C_sf"/>
</dbReference>
<dbReference type="InterPro" id="IPR020587">
    <property type="entry name" value="RecA_monomer-monomer_interface"/>
</dbReference>
<dbReference type="NCBIfam" id="TIGR02012">
    <property type="entry name" value="tigrfam_recA"/>
    <property type="match status" value="1"/>
</dbReference>
<dbReference type="PANTHER" id="PTHR45900:SF1">
    <property type="entry name" value="MITOCHONDRIAL DNA REPAIR PROTEIN RECA HOMOLOG-RELATED"/>
    <property type="match status" value="1"/>
</dbReference>
<dbReference type="PANTHER" id="PTHR45900">
    <property type="entry name" value="RECA"/>
    <property type="match status" value="1"/>
</dbReference>
<dbReference type="Pfam" id="PF00154">
    <property type="entry name" value="RecA"/>
    <property type="match status" value="1"/>
</dbReference>
<dbReference type="Pfam" id="PF21096">
    <property type="entry name" value="RecA_C"/>
    <property type="match status" value="1"/>
</dbReference>
<dbReference type="PRINTS" id="PR00142">
    <property type="entry name" value="RECA"/>
</dbReference>
<dbReference type="SMART" id="SM00382">
    <property type="entry name" value="AAA"/>
    <property type="match status" value="1"/>
</dbReference>
<dbReference type="SUPFAM" id="SSF52540">
    <property type="entry name" value="P-loop containing nucleoside triphosphate hydrolases"/>
    <property type="match status" value="1"/>
</dbReference>
<dbReference type="SUPFAM" id="SSF54752">
    <property type="entry name" value="RecA protein, C-terminal domain"/>
    <property type="match status" value="1"/>
</dbReference>
<dbReference type="PROSITE" id="PS00321">
    <property type="entry name" value="RECA_1"/>
    <property type="match status" value="1"/>
</dbReference>
<dbReference type="PROSITE" id="PS50162">
    <property type="entry name" value="RECA_2"/>
    <property type="match status" value="1"/>
</dbReference>
<dbReference type="PROSITE" id="PS50163">
    <property type="entry name" value="RECA_3"/>
    <property type="match status" value="1"/>
</dbReference>
<gene>
    <name evidence="1" type="primary">recA</name>
    <name type="ordered locus">PputW619_4030</name>
</gene>
<name>RECA_PSEPW</name>
<evidence type="ECO:0000255" key="1">
    <source>
        <dbReference type="HAMAP-Rule" id="MF_00268"/>
    </source>
</evidence>
<proteinExistence type="inferred from homology"/>